<accession>A5GQF2</accession>
<sequence length="39" mass="4476">MDRNPNPNNLPVELNRTSLYLGLLLVFVTGVLFSSYFFN</sequence>
<proteinExistence type="inferred from homology"/>
<gene>
    <name evidence="1" type="primary">psbL</name>
    <name type="ordered locus">SynRCC307_0208</name>
</gene>
<evidence type="ECO:0000255" key="1">
    <source>
        <dbReference type="HAMAP-Rule" id="MF_01317"/>
    </source>
</evidence>
<dbReference type="EMBL" id="CT978603">
    <property type="protein sequence ID" value="CAK27111.1"/>
    <property type="molecule type" value="Genomic_DNA"/>
</dbReference>
<dbReference type="SMR" id="A5GQF2"/>
<dbReference type="STRING" id="316278.SynRCC307_0208"/>
<dbReference type="KEGG" id="syr:SynRCC307_0208"/>
<dbReference type="eggNOG" id="ENOG5033AKP">
    <property type="taxonomic scope" value="Bacteria"/>
</dbReference>
<dbReference type="HOGENOM" id="CLU_214425_0_0_3"/>
<dbReference type="Proteomes" id="UP000001115">
    <property type="component" value="Chromosome"/>
</dbReference>
<dbReference type="GO" id="GO:0009539">
    <property type="term" value="C:photosystem II reaction center"/>
    <property type="evidence" value="ECO:0007669"/>
    <property type="project" value="InterPro"/>
</dbReference>
<dbReference type="GO" id="GO:0031676">
    <property type="term" value="C:plasma membrane-derived thylakoid membrane"/>
    <property type="evidence" value="ECO:0007669"/>
    <property type="project" value="UniProtKB-SubCell"/>
</dbReference>
<dbReference type="GO" id="GO:0015979">
    <property type="term" value="P:photosynthesis"/>
    <property type="evidence" value="ECO:0007669"/>
    <property type="project" value="UniProtKB-UniRule"/>
</dbReference>
<dbReference type="HAMAP" id="MF_01317">
    <property type="entry name" value="PSII_PsbL"/>
    <property type="match status" value="1"/>
</dbReference>
<dbReference type="InterPro" id="IPR003372">
    <property type="entry name" value="PSII_PsbL"/>
</dbReference>
<dbReference type="InterPro" id="IPR037266">
    <property type="entry name" value="PSII_PsbL_sf"/>
</dbReference>
<dbReference type="NCBIfam" id="NF001972">
    <property type="entry name" value="PRK00753.1"/>
    <property type="match status" value="1"/>
</dbReference>
<dbReference type="Pfam" id="PF02419">
    <property type="entry name" value="PsbL"/>
    <property type="match status" value="1"/>
</dbReference>
<dbReference type="SUPFAM" id="SSF161017">
    <property type="entry name" value="Photosystem II reaction center protein L, PsbL"/>
    <property type="match status" value="1"/>
</dbReference>
<keyword id="KW-0472">Membrane</keyword>
<keyword id="KW-0602">Photosynthesis</keyword>
<keyword id="KW-0604">Photosystem II</keyword>
<keyword id="KW-0674">Reaction center</keyword>
<keyword id="KW-1185">Reference proteome</keyword>
<keyword id="KW-0793">Thylakoid</keyword>
<keyword id="KW-0812">Transmembrane</keyword>
<keyword id="KW-1133">Transmembrane helix</keyword>
<reference key="1">
    <citation type="submission" date="2006-05" db="EMBL/GenBank/DDBJ databases">
        <authorList>
            <consortium name="Genoscope"/>
        </authorList>
    </citation>
    <scope>NUCLEOTIDE SEQUENCE [LARGE SCALE GENOMIC DNA]</scope>
    <source>
        <strain>RCC307</strain>
    </source>
</reference>
<name>PSBL_SYNR3</name>
<comment type="function">
    <text evidence="1">One of the components of the core complex of photosystem II (PSII). PSII is a light-driven water:plastoquinone oxidoreductase that uses light energy to abstract electrons from H(2)O, generating O(2) and a proton gradient subsequently used for ATP formation. It consists of a core antenna complex that captures photons, and an electron transfer chain that converts photonic excitation into a charge separation. This subunit is found at the monomer-monomer interface and is required for correct PSII assembly and/or dimerization.</text>
</comment>
<comment type="subunit">
    <text evidence="1">PSII is composed of 1 copy each of membrane proteins PsbA, PsbB, PsbC, PsbD, PsbE, PsbF, PsbH, PsbI, PsbJ, PsbK, PsbL, PsbM, PsbT, PsbX, PsbY, PsbZ, Psb30/Ycf12, peripheral proteins PsbO, CyanoQ (PsbQ), PsbU, PsbV and a large number of cofactors. It forms dimeric complexes.</text>
</comment>
<comment type="subcellular location">
    <subcellularLocation>
        <location evidence="1">Cellular thylakoid membrane</location>
        <topology evidence="1">Single-pass membrane protein</topology>
    </subcellularLocation>
</comment>
<comment type="similarity">
    <text evidence="1">Belongs to the PsbL family.</text>
</comment>
<feature type="chain" id="PRO_0000306216" description="Photosystem II reaction center protein L">
    <location>
        <begin position="1"/>
        <end position="39"/>
    </location>
</feature>
<feature type="transmembrane region" description="Helical" evidence="1">
    <location>
        <begin position="18"/>
        <end position="38"/>
    </location>
</feature>
<organism>
    <name type="scientific">Synechococcus sp. (strain RCC307)</name>
    <dbReference type="NCBI Taxonomy" id="316278"/>
    <lineage>
        <taxon>Bacteria</taxon>
        <taxon>Bacillati</taxon>
        <taxon>Cyanobacteriota</taxon>
        <taxon>Cyanophyceae</taxon>
        <taxon>Synechococcales</taxon>
        <taxon>Synechococcaceae</taxon>
        <taxon>Synechococcus</taxon>
    </lineage>
</organism>
<protein>
    <recommendedName>
        <fullName evidence="1">Photosystem II reaction center protein L</fullName>
        <shortName evidence="1">PSII-L</shortName>
    </recommendedName>
</protein>